<sequence>MLPFLPEPSLSYTQQNRTAVLLLNLGTPDAPTAQAVRPYLKSFLTDRRVVELPKWLWYPILHGLVLTLRPKKSAHAYEKIWFKEGSPLEVYTARQAAALAKRMPDLIVRHAMTYGNPSVADVLSELKAQGAGRLLVIPMYPQYAASSSGAAVDKVCEQLLLQRNQMSVRTVSRFYDDTGYIDAMKNHILRYWAEHGRGKKLMLSFHGVPQKHYDLGDPYPDECRHTAKLLAEALELTEDQYVVSFQSQFGRAKWVTPSTQDLFGKLPKQGVTELDVFCPGFLADCLETMEEIALMGREQFYEAGGKSYRYIPCLNDNPDWIDALVALAEENLGGWR</sequence>
<proteinExistence type="inferred from homology"/>
<evidence type="ECO:0000255" key="1">
    <source>
        <dbReference type="HAMAP-Rule" id="MF_00323"/>
    </source>
</evidence>
<evidence type="ECO:0000305" key="2"/>
<gene>
    <name evidence="1" type="primary">hemH</name>
    <name type="ordered locus">NMA0927</name>
</gene>
<name>HEMH_NEIMA</name>
<protein>
    <recommendedName>
        <fullName evidence="1">Ferrochelatase</fullName>
        <ecNumber evidence="1">4.98.1.1</ecNumber>
    </recommendedName>
    <alternativeName>
        <fullName evidence="1">Heme synthase</fullName>
    </alternativeName>
    <alternativeName>
        <fullName evidence="1">Protoheme ferro-lyase</fullName>
    </alternativeName>
</protein>
<comment type="function">
    <text evidence="1">Catalyzes the ferrous insertion into protoporphyrin IX.</text>
</comment>
<comment type="catalytic activity">
    <reaction evidence="1">
        <text>heme b + 2 H(+) = protoporphyrin IX + Fe(2+)</text>
        <dbReference type="Rhea" id="RHEA:22584"/>
        <dbReference type="ChEBI" id="CHEBI:15378"/>
        <dbReference type="ChEBI" id="CHEBI:29033"/>
        <dbReference type="ChEBI" id="CHEBI:57306"/>
        <dbReference type="ChEBI" id="CHEBI:60344"/>
        <dbReference type="EC" id="4.98.1.1"/>
    </reaction>
</comment>
<comment type="pathway">
    <text evidence="1">Porphyrin-containing compound metabolism; protoheme biosynthesis; protoheme from protoporphyrin-IX: step 1/1.</text>
</comment>
<comment type="subcellular location">
    <subcellularLocation>
        <location evidence="1">Cytoplasm</location>
    </subcellularLocation>
</comment>
<comment type="similarity">
    <text evidence="1 2">Belongs to the ferrochelatase family.</text>
</comment>
<dbReference type="EC" id="4.98.1.1" evidence="1"/>
<dbReference type="EMBL" id="AL157959">
    <property type="protein sequence ID" value="CAM08154.1"/>
    <property type="molecule type" value="Genomic_DNA"/>
</dbReference>
<dbReference type="PIR" id="H81938">
    <property type="entry name" value="H81938"/>
</dbReference>
<dbReference type="SMR" id="Q9JVA5"/>
<dbReference type="EnsemblBacteria" id="CAM08154">
    <property type="protein sequence ID" value="CAM08154"/>
    <property type="gene ID" value="NMA0927"/>
</dbReference>
<dbReference type="KEGG" id="nma:NMA0927"/>
<dbReference type="HOGENOM" id="CLU_018884_0_0_4"/>
<dbReference type="UniPathway" id="UPA00252">
    <property type="reaction ID" value="UER00325"/>
</dbReference>
<dbReference type="Proteomes" id="UP000000626">
    <property type="component" value="Chromosome"/>
</dbReference>
<dbReference type="GO" id="GO:0005737">
    <property type="term" value="C:cytoplasm"/>
    <property type="evidence" value="ECO:0007669"/>
    <property type="project" value="UniProtKB-SubCell"/>
</dbReference>
<dbReference type="GO" id="GO:0004325">
    <property type="term" value="F:ferrochelatase activity"/>
    <property type="evidence" value="ECO:0007669"/>
    <property type="project" value="UniProtKB-UniRule"/>
</dbReference>
<dbReference type="GO" id="GO:0046872">
    <property type="term" value="F:metal ion binding"/>
    <property type="evidence" value="ECO:0007669"/>
    <property type="project" value="UniProtKB-KW"/>
</dbReference>
<dbReference type="GO" id="GO:0006783">
    <property type="term" value="P:heme biosynthetic process"/>
    <property type="evidence" value="ECO:0007669"/>
    <property type="project" value="UniProtKB-UniRule"/>
</dbReference>
<dbReference type="CDD" id="cd00419">
    <property type="entry name" value="Ferrochelatase_C"/>
    <property type="match status" value="1"/>
</dbReference>
<dbReference type="CDD" id="cd03411">
    <property type="entry name" value="Ferrochelatase_N"/>
    <property type="match status" value="1"/>
</dbReference>
<dbReference type="FunFam" id="3.40.50.1400:FF:000002">
    <property type="entry name" value="Ferrochelatase"/>
    <property type="match status" value="1"/>
</dbReference>
<dbReference type="Gene3D" id="3.40.50.1400">
    <property type="match status" value="2"/>
</dbReference>
<dbReference type="HAMAP" id="MF_00323">
    <property type="entry name" value="Ferrochelatase"/>
    <property type="match status" value="1"/>
</dbReference>
<dbReference type="InterPro" id="IPR001015">
    <property type="entry name" value="Ferrochelatase"/>
</dbReference>
<dbReference type="InterPro" id="IPR019772">
    <property type="entry name" value="Ferrochelatase_AS"/>
</dbReference>
<dbReference type="InterPro" id="IPR033644">
    <property type="entry name" value="Ferrochelatase_C"/>
</dbReference>
<dbReference type="InterPro" id="IPR033659">
    <property type="entry name" value="Ferrochelatase_N"/>
</dbReference>
<dbReference type="NCBIfam" id="TIGR00109">
    <property type="entry name" value="hemH"/>
    <property type="match status" value="1"/>
</dbReference>
<dbReference type="PANTHER" id="PTHR11108">
    <property type="entry name" value="FERROCHELATASE"/>
    <property type="match status" value="1"/>
</dbReference>
<dbReference type="PANTHER" id="PTHR11108:SF1">
    <property type="entry name" value="FERROCHELATASE, MITOCHONDRIAL"/>
    <property type="match status" value="1"/>
</dbReference>
<dbReference type="Pfam" id="PF00762">
    <property type="entry name" value="Ferrochelatase"/>
    <property type="match status" value="1"/>
</dbReference>
<dbReference type="SUPFAM" id="SSF53800">
    <property type="entry name" value="Chelatase"/>
    <property type="match status" value="1"/>
</dbReference>
<dbReference type="PROSITE" id="PS00534">
    <property type="entry name" value="FERROCHELATASE"/>
    <property type="match status" value="1"/>
</dbReference>
<accession>Q9JVA5</accession>
<accession>A1IQX0</accession>
<reference key="1">
    <citation type="journal article" date="2000" name="Nature">
        <title>Complete DNA sequence of a serogroup A strain of Neisseria meningitidis Z2491.</title>
        <authorList>
            <person name="Parkhill J."/>
            <person name="Achtman M."/>
            <person name="James K.D."/>
            <person name="Bentley S.D."/>
            <person name="Churcher C.M."/>
            <person name="Klee S.R."/>
            <person name="Morelli G."/>
            <person name="Basham D."/>
            <person name="Brown D."/>
            <person name="Chillingworth T."/>
            <person name="Davies R.M."/>
            <person name="Davis P."/>
            <person name="Devlin K."/>
            <person name="Feltwell T."/>
            <person name="Hamlin N."/>
            <person name="Holroyd S."/>
            <person name="Jagels K."/>
            <person name="Leather S."/>
            <person name="Moule S."/>
            <person name="Mungall K.L."/>
            <person name="Quail M.A."/>
            <person name="Rajandream M.A."/>
            <person name="Rutherford K.M."/>
            <person name="Simmonds M."/>
            <person name="Skelton J."/>
            <person name="Whitehead S."/>
            <person name="Spratt B.G."/>
            <person name="Barrell B.G."/>
        </authorList>
    </citation>
    <scope>NUCLEOTIDE SEQUENCE [LARGE SCALE GENOMIC DNA]</scope>
    <source>
        <strain>DSM 15465 / Z2491</strain>
    </source>
</reference>
<organism>
    <name type="scientific">Neisseria meningitidis serogroup A / serotype 4A (strain DSM 15465 / Z2491)</name>
    <dbReference type="NCBI Taxonomy" id="122587"/>
    <lineage>
        <taxon>Bacteria</taxon>
        <taxon>Pseudomonadati</taxon>
        <taxon>Pseudomonadota</taxon>
        <taxon>Betaproteobacteria</taxon>
        <taxon>Neisseriales</taxon>
        <taxon>Neisseriaceae</taxon>
        <taxon>Neisseria</taxon>
    </lineage>
</organism>
<feature type="chain" id="PRO_0000175169" description="Ferrochelatase">
    <location>
        <begin position="1"/>
        <end position="336"/>
    </location>
</feature>
<feature type="binding site" evidence="1">
    <location>
        <position position="206"/>
    </location>
    <ligand>
        <name>Fe cation</name>
        <dbReference type="ChEBI" id="CHEBI:24875"/>
    </ligand>
</feature>
<feature type="binding site" evidence="1">
    <location>
        <position position="287"/>
    </location>
    <ligand>
        <name>Fe cation</name>
        <dbReference type="ChEBI" id="CHEBI:24875"/>
    </ligand>
</feature>
<keyword id="KW-0963">Cytoplasm</keyword>
<keyword id="KW-0350">Heme biosynthesis</keyword>
<keyword id="KW-0408">Iron</keyword>
<keyword id="KW-0456">Lyase</keyword>
<keyword id="KW-0479">Metal-binding</keyword>
<keyword id="KW-0627">Porphyrin biosynthesis</keyword>